<proteinExistence type="inferred from homology"/>
<organism>
    <name type="scientific">Cavia porcellus</name>
    <name type="common">Guinea pig</name>
    <dbReference type="NCBI Taxonomy" id="10141"/>
    <lineage>
        <taxon>Eukaryota</taxon>
        <taxon>Metazoa</taxon>
        <taxon>Chordata</taxon>
        <taxon>Craniata</taxon>
        <taxon>Vertebrata</taxon>
        <taxon>Euteleostomi</taxon>
        <taxon>Mammalia</taxon>
        <taxon>Eutheria</taxon>
        <taxon>Euarchontoglires</taxon>
        <taxon>Glires</taxon>
        <taxon>Rodentia</taxon>
        <taxon>Hystricomorpha</taxon>
        <taxon>Caviidae</taxon>
        <taxon>Cavia</taxon>
    </lineage>
</organism>
<dbReference type="EMBL" id="AF060698">
    <property type="protein sequence ID" value="AAC80428.1"/>
    <property type="molecule type" value="Genomic_DNA"/>
</dbReference>
<dbReference type="RefSeq" id="XP_013015509.1">
    <property type="nucleotide sequence ID" value="XM_013160055.1"/>
</dbReference>
<dbReference type="RefSeq" id="XP_013015510.1">
    <property type="nucleotide sequence ID" value="XM_013160056.1"/>
</dbReference>
<dbReference type="RefSeq" id="XP_013015511.1">
    <property type="nucleotide sequence ID" value="XM_013160057.1"/>
</dbReference>
<dbReference type="SMR" id="Q9Z2I3"/>
<dbReference type="FunCoup" id="Q9Z2I3">
    <property type="interactions" value="473"/>
</dbReference>
<dbReference type="STRING" id="10141.ENSCPOP00000016457"/>
<dbReference type="Ensembl" id="ENSCPOT00000012621.3">
    <property type="protein sequence ID" value="ENSCPOP00000016457.1"/>
    <property type="gene ID" value="ENSCPOG00000012502.4"/>
</dbReference>
<dbReference type="VEuPathDB" id="HostDB:ENSCPOG00000012502"/>
<dbReference type="eggNOG" id="KOG3656">
    <property type="taxonomic scope" value="Eukaryota"/>
</dbReference>
<dbReference type="GeneTree" id="ENSGT01020000230359"/>
<dbReference type="HOGENOM" id="CLU_009579_8_3_1"/>
<dbReference type="InParanoid" id="Q9Z2I3"/>
<dbReference type="OMA" id="DMGLLCE"/>
<dbReference type="OrthoDB" id="9445403at2759"/>
<dbReference type="TreeFam" id="TF330966"/>
<dbReference type="Proteomes" id="UP000005447">
    <property type="component" value="Unassembled WGS sequence"/>
</dbReference>
<dbReference type="Bgee" id="ENSCPOG00000012502">
    <property type="expression patterns" value="Expressed in pituitary gland and 2 other cell types or tissues"/>
</dbReference>
<dbReference type="GO" id="GO:0005737">
    <property type="term" value="C:cytoplasm"/>
    <property type="evidence" value="ECO:0007669"/>
    <property type="project" value="TreeGrafter"/>
</dbReference>
<dbReference type="GO" id="GO:0009897">
    <property type="term" value="C:external side of plasma membrane"/>
    <property type="evidence" value="ECO:0007669"/>
    <property type="project" value="TreeGrafter"/>
</dbReference>
<dbReference type="GO" id="GO:0019957">
    <property type="term" value="F:C-C chemokine binding"/>
    <property type="evidence" value="ECO:0007669"/>
    <property type="project" value="Ensembl"/>
</dbReference>
<dbReference type="GO" id="GO:0016493">
    <property type="term" value="F:C-C chemokine receptor activity"/>
    <property type="evidence" value="ECO:0007669"/>
    <property type="project" value="Ensembl"/>
</dbReference>
<dbReference type="GO" id="GO:0019722">
    <property type="term" value="P:calcium-mediated signaling"/>
    <property type="evidence" value="ECO:0007669"/>
    <property type="project" value="TreeGrafter"/>
</dbReference>
<dbReference type="GO" id="GO:0060326">
    <property type="term" value="P:cell chemotaxis"/>
    <property type="evidence" value="ECO:0007669"/>
    <property type="project" value="TreeGrafter"/>
</dbReference>
<dbReference type="GO" id="GO:0006955">
    <property type="term" value="P:immune response"/>
    <property type="evidence" value="ECO:0007669"/>
    <property type="project" value="TreeGrafter"/>
</dbReference>
<dbReference type="GO" id="GO:0006954">
    <property type="term" value="P:inflammatory response"/>
    <property type="evidence" value="ECO:0007669"/>
    <property type="project" value="InterPro"/>
</dbReference>
<dbReference type="GO" id="GO:0045766">
    <property type="term" value="P:positive regulation of angiogenesis"/>
    <property type="evidence" value="ECO:0007669"/>
    <property type="project" value="Ensembl"/>
</dbReference>
<dbReference type="GO" id="GO:0007204">
    <property type="term" value="P:positive regulation of cytosolic calcium ion concentration"/>
    <property type="evidence" value="ECO:0007669"/>
    <property type="project" value="TreeGrafter"/>
</dbReference>
<dbReference type="GO" id="GO:0001938">
    <property type="term" value="P:positive regulation of endothelial cell proliferation"/>
    <property type="evidence" value="ECO:0007669"/>
    <property type="project" value="Ensembl"/>
</dbReference>
<dbReference type="CDD" id="cd15185">
    <property type="entry name" value="7tmA_CCR3"/>
    <property type="match status" value="1"/>
</dbReference>
<dbReference type="FunFam" id="1.20.1070.10:FF:000026">
    <property type="entry name" value="C-C chemokine receptor type 5"/>
    <property type="match status" value="1"/>
</dbReference>
<dbReference type="Gene3D" id="1.20.1070.10">
    <property type="entry name" value="Rhodopsin 7-helix transmembrane proteins"/>
    <property type="match status" value="1"/>
</dbReference>
<dbReference type="InterPro" id="IPR050119">
    <property type="entry name" value="CCR1-9-like"/>
</dbReference>
<dbReference type="InterPro" id="IPR002238">
    <property type="entry name" value="Chemokine_CCR3"/>
</dbReference>
<dbReference type="InterPro" id="IPR000355">
    <property type="entry name" value="Chemokine_rcpt"/>
</dbReference>
<dbReference type="InterPro" id="IPR000276">
    <property type="entry name" value="GPCR_Rhodpsn"/>
</dbReference>
<dbReference type="InterPro" id="IPR017452">
    <property type="entry name" value="GPCR_Rhodpsn_7TM"/>
</dbReference>
<dbReference type="PANTHER" id="PTHR10489:SF649">
    <property type="entry name" value="C-C CHEMOKINE RECEPTOR TYPE 3"/>
    <property type="match status" value="1"/>
</dbReference>
<dbReference type="PANTHER" id="PTHR10489">
    <property type="entry name" value="CELL ADHESION MOLECULE"/>
    <property type="match status" value="1"/>
</dbReference>
<dbReference type="Pfam" id="PF00001">
    <property type="entry name" value="7tm_1"/>
    <property type="match status" value="1"/>
</dbReference>
<dbReference type="PRINTS" id="PR00657">
    <property type="entry name" value="CCCHEMOKINER"/>
</dbReference>
<dbReference type="PRINTS" id="PR01108">
    <property type="entry name" value="CHEMOKINER3"/>
</dbReference>
<dbReference type="PRINTS" id="PR00237">
    <property type="entry name" value="GPCRRHODOPSN"/>
</dbReference>
<dbReference type="SUPFAM" id="SSF81321">
    <property type="entry name" value="Family A G protein-coupled receptor-like"/>
    <property type="match status" value="1"/>
</dbReference>
<dbReference type="PROSITE" id="PS00237">
    <property type="entry name" value="G_PROTEIN_RECEP_F1_1"/>
    <property type="match status" value="1"/>
</dbReference>
<dbReference type="PROSITE" id="PS50262">
    <property type="entry name" value="G_PROTEIN_RECEP_F1_2"/>
    <property type="match status" value="1"/>
</dbReference>
<keyword id="KW-1003">Cell membrane</keyword>
<keyword id="KW-0297">G-protein coupled receptor</keyword>
<keyword id="KW-0472">Membrane</keyword>
<keyword id="KW-0675">Receptor</keyword>
<keyword id="KW-1185">Reference proteome</keyword>
<keyword id="KW-0807">Transducer</keyword>
<keyword id="KW-0812">Transmembrane</keyword>
<keyword id="KW-1133">Transmembrane helix</keyword>
<evidence type="ECO:0000250" key="1">
    <source>
        <dbReference type="UniProtKB" id="P51677"/>
    </source>
</evidence>
<evidence type="ECO:0000255" key="2"/>
<evidence type="ECO:0000255" key="3">
    <source>
        <dbReference type="PROSITE-ProRule" id="PRU00521"/>
    </source>
</evidence>
<reference key="1">
    <citation type="journal article" date="1998" name="J. Immunol.">
        <title>Cloning and characterization of the guinea pig eosinophil eotaxin receptor, C-C chemokine receptor-3: blockade using a monoclonal antibody in vivo.</title>
        <authorList>
            <person name="Sabroe I."/>
            <person name="Conroy D.M."/>
            <person name="Gerard N.P."/>
            <person name="Li Y."/>
            <person name="Collins P.D."/>
            <person name="Post T.W."/>
            <person name="Jose P.J."/>
            <person name="Williams T.J."/>
            <person name="Gerard C.J."/>
            <person name="Ponath P.D."/>
        </authorList>
    </citation>
    <scope>NUCLEOTIDE SEQUENCE [GENOMIC DNA]</scope>
</reference>
<protein>
    <recommendedName>
        <fullName>C-C chemokine receptor type 3</fullName>
        <shortName>C-C CKR-3</shortName>
        <shortName>CC-CKR-3</shortName>
        <shortName>CCR-3</shortName>
        <shortName>CCR3</shortName>
        <shortName>CKR3</shortName>
    </recommendedName>
    <cdAntigenName>CD193</cdAntigenName>
</protein>
<gene>
    <name type="primary">CCR3</name>
    <name type="synonym">CMKBR3</name>
</gene>
<name>CCR3_CAVPO</name>
<accession>Q9Z2I3</accession>
<comment type="function">
    <text evidence="1">Receptor for C-C type chemokine. Binds and responds to a variety of chemokines, including CCL11, CCL26, CCL7, CCL13, RANTES(CCL5) and CCL15. Subsequently transduces a signal by increasing the intracellular calcium ions level. In addition acts as a possible functional receptor for NARS1.</text>
</comment>
<comment type="subcellular location">
    <subcellularLocation>
        <location>Cell membrane</location>
        <topology evidence="2">Multi-pass membrane protein</topology>
    </subcellularLocation>
</comment>
<comment type="similarity">
    <text evidence="3">Belongs to the G-protein coupled receptor 1 family.</text>
</comment>
<feature type="chain" id="PRO_0000069237" description="C-C chemokine receptor type 3">
    <location>
        <begin position="1"/>
        <end position="358"/>
    </location>
</feature>
<feature type="topological domain" description="Extracellular" evidence="2">
    <location>
        <begin position="1"/>
        <end position="43"/>
    </location>
</feature>
<feature type="transmembrane region" description="Helical; Name=1" evidence="2">
    <location>
        <begin position="44"/>
        <end position="64"/>
    </location>
</feature>
<feature type="topological domain" description="Cytoplasmic" evidence="2">
    <location>
        <begin position="65"/>
        <end position="74"/>
    </location>
</feature>
<feature type="transmembrane region" description="Helical; Name=2" evidence="2">
    <location>
        <begin position="75"/>
        <end position="95"/>
    </location>
</feature>
<feature type="topological domain" description="Extracellular" evidence="2">
    <location>
        <begin position="96"/>
        <end position="112"/>
    </location>
</feature>
<feature type="transmembrane region" description="Helical; Name=3" evidence="2">
    <location>
        <begin position="113"/>
        <end position="133"/>
    </location>
</feature>
<feature type="topological domain" description="Cytoplasmic" evidence="2">
    <location>
        <begin position="134"/>
        <end position="154"/>
    </location>
</feature>
<feature type="transmembrane region" description="Helical; Name=4" evidence="2">
    <location>
        <begin position="155"/>
        <end position="175"/>
    </location>
</feature>
<feature type="topological domain" description="Extracellular" evidence="2">
    <location>
        <begin position="176"/>
        <end position="206"/>
    </location>
</feature>
<feature type="transmembrane region" description="Helical; Name=5" evidence="2">
    <location>
        <begin position="207"/>
        <end position="227"/>
    </location>
</feature>
<feature type="topological domain" description="Cytoplasmic" evidence="2">
    <location>
        <begin position="228"/>
        <end position="243"/>
    </location>
</feature>
<feature type="transmembrane region" description="Helical; Name=6" evidence="2">
    <location>
        <begin position="244"/>
        <end position="264"/>
    </location>
</feature>
<feature type="topological domain" description="Extracellular" evidence="2">
    <location>
        <begin position="265"/>
        <end position="287"/>
    </location>
</feature>
<feature type="transmembrane region" description="Helical; Name=7" evidence="2">
    <location>
        <begin position="288"/>
        <end position="308"/>
    </location>
</feature>
<feature type="topological domain" description="Cytoplasmic" evidence="2">
    <location>
        <begin position="309"/>
        <end position="358"/>
    </location>
</feature>
<sequence>MATYPEEAELETEFPGTTFYDYEFAQPCFKVSITDLGAQFLPSLFSLVFIVGLLGNITVIVVLTKYQKLKIMTNIYLLNLAISDLLFLFTLPFWTYYVHWNKWVFGHFMCKIISGLYYVGLFSEIFFIILLTIDRYLAIVHAVFALRTRTVTFGIITSVITWVLAVLAALPEFMFYGTQGHFEVLFCGPSYPEKKEHHWKRFQALRMNIFGLALPLLIMIICYTGIIKTLLRCPSKKKYKAIRLIFVIMVVFFVFWTPYNLLLLFSAFDLSFLDDCERSKQLDMAKHVTEVIAHTHCCINPIIYAFVGERFQKYLRHFLHRNVTMHLSKYIPFFTSEKLERSSSISPSSGDPELSVVF</sequence>